<evidence type="ECO:0000250" key="1">
    <source>
        <dbReference type="UniProtKB" id="P76459"/>
    </source>
</evidence>
<evidence type="ECO:0000255" key="2">
    <source>
        <dbReference type="PROSITE-ProRule" id="PRU10034"/>
    </source>
</evidence>
<evidence type="ECO:0000305" key="3"/>
<proteinExistence type="inferred from homology"/>
<reference key="1">
    <citation type="journal article" date="1995" name="Science">
        <title>Whole-genome random sequencing and assembly of Haemophilus influenzae Rd.</title>
        <authorList>
            <person name="Fleischmann R.D."/>
            <person name="Adams M.D."/>
            <person name="White O."/>
            <person name="Clayton R.A."/>
            <person name="Kirkness E.F."/>
            <person name="Kerlavage A.R."/>
            <person name="Bult C.J."/>
            <person name="Tomb J.-F."/>
            <person name="Dougherty B.A."/>
            <person name="Merrick J.M."/>
            <person name="McKenney K."/>
            <person name="Sutton G.G."/>
            <person name="FitzHugh W."/>
            <person name="Fields C.A."/>
            <person name="Gocayne J.D."/>
            <person name="Scott J.D."/>
            <person name="Shirley R."/>
            <person name="Liu L.-I."/>
            <person name="Glodek A."/>
            <person name="Kelley J.M."/>
            <person name="Weidman J.F."/>
            <person name="Phillips C.A."/>
            <person name="Spriggs T."/>
            <person name="Hedblom E."/>
            <person name="Cotton M.D."/>
            <person name="Utterback T.R."/>
            <person name="Hanna M.C."/>
            <person name="Nguyen D.T."/>
            <person name="Saudek D.M."/>
            <person name="Brandon R.C."/>
            <person name="Fine L.D."/>
            <person name="Fritchman J.L."/>
            <person name="Fuhrmann J.L."/>
            <person name="Geoghagen N.S.M."/>
            <person name="Gnehm C.L."/>
            <person name="McDonald L.A."/>
            <person name="Small K.V."/>
            <person name="Fraser C.M."/>
            <person name="Smith H.O."/>
            <person name="Venter J.C."/>
        </authorList>
    </citation>
    <scope>NUCLEOTIDE SEQUENCE [LARGE SCALE GENOMIC DNA]</scope>
    <source>
        <strain>ATCC 51907 / DSM 11121 / KW20 / Rd</strain>
    </source>
</reference>
<keyword id="KW-0276">Fatty acid metabolism</keyword>
<keyword id="KW-0443">Lipid metabolism</keyword>
<keyword id="KW-1185">Reference proteome</keyword>
<keyword id="KW-0808">Transferase</keyword>
<feature type="chain" id="PRO_0000157916" description="Acetate CoA-transferase subunit beta">
    <location>
        <begin position="1"/>
        <end position="223"/>
    </location>
</feature>
<feature type="active site" evidence="2">
    <location>
        <position position="46"/>
    </location>
</feature>
<dbReference type="EC" id="2.8.3.8" evidence="1"/>
<dbReference type="EMBL" id="L42023">
    <property type="protein sequence ID" value="AAC22432.1"/>
    <property type="molecule type" value="Genomic_DNA"/>
</dbReference>
<dbReference type="PIR" id="G64158">
    <property type="entry name" value="G64158"/>
</dbReference>
<dbReference type="RefSeq" id="NP_438932.1">
    <property type="nucleotide sequence ID" value="NC_000907.1"/>
</dbReference>
<dbReference type="SMR" id="P44874"/>
<dbReference type="STRING" id="71421.HI_0773"/>
<dbReference type="EnsemblBacteria" id="AAC22432">
    <property type="protein sequence ID" value="AAC22432"/>
    <property type="gene ID" value="HI_0773"/>
</dbReference>
<dbReference type="KEGG" id="hin:HI_0773"/>
<dbReference type="PATRIC" id="fig|71421.8.peg.812"/>
<dbReference type="eggNOG" id="COG2057">
    <property type="taxonomic scope" value="Bacteria"/>
</dbReference>
<dbReference type="HOGENOM" id="CLU_019942_4_1_6"/>
<dbReference type="OrthoDB" id="9778604at2"/>
<dbReference type="PhylomeDB" id="P44874"/>
<dbReference type="BioCyc" id="HINF71421:G1GJ1-813-MONOMER"/>
<dbReference type="UniPathway" id="UPA00656"/>
<dbReference type="Proteomes" id="UP000000579">
    <property type="component" value="Chromosome"/>
</dbReference>
<dbReference type="GO" id="GO:0008775">
    <property type="term" value="F:acetate CoA-transferase activity"/>
    <property type="evidence" value="ECO:0007669"/>
    <property type="project" value="UniProtKB-EC"/>
</dbReference>
<dbReference type="GO" id="GO:0046459">
    <property type="term" value="P:short-chain fatty acid metabolic process"/>
    <property type="evidence" value="ECO:0007669"/>
    <property type="project" value="UniProtKB-UniPathway"/>
</dbReference>
<dbReference type="Gene3D" id="3.40.1080.10">
    <property type="entry name" value="Glutaconate Coenzyme A-transferase"/>
    <property type="match status" value="1"/>
</dbReference>
<dbReference type="InterPro" id="IPR012791">
    <property type="entry name" value="3-oxoacid_CoA-transf_B"/>
</dbReference>
<dbReference type="InterPro" id="IPR004165">
    <property type="entry name" value="CoA_trans_fam_I"/>
</dbReference>
<dbReference type="InterPro" id="IPR004164">
    <property type="entry name" value="CoA_transf_AS"/>
</dbReference>
<dbReference type="InterPro" id="IPR037171">
    <property type="entry name" value="NagB/RpiA_transferase-like"/>
</dbReference>
<dbReference type="NCBIfam" id="TIGR02428">
    <property type="entry name" value="pcaJ_scoB_fam"/>
    <property type="match status" value="1"/>
</dbReference>
<dbReference type="PANTHER" id="PTHR13707">
    <property type="entry name" value="KETOACID-COENZYME A TRANSFERASE"/>
    <property type="match status" value="1"/>
</dbReference>
<dbReference type="PANTHER" id="PTHR13707:SF57">
    <property type="entry name" value="SUCCINYL-COA:3-KETOACID COENZYME A TRANSFERASE SUBUNIT B-RELATED"/>
    <property type="match status" value="1"/>
</dbReference>
<dbReference type="Pfam" id="PF01144">
    <property type="entry name" value="CoA_trans"/>
    <property type="match status" value="1"/>
</dbReference>
<dbReference type="SMART" id="SM00882">
    <property type="entry name" value="CoA_trans"/>
    <property type="match status" value="1"/>
</dbReference>
<dbReference type="SUPFAM" id="SSF100950">
    <property type="entry name" value="NagB/RpiA/CoA transferase-like"/>
    <property type="match status" value="1"/>
</dbReference>
<dbReference type="PROSITE" id="PS01274">
    <property type="entry name" value="COA_TRANSF_2"/>
    <property type="match status" value="1"/>
</dbReference>
<accession>P44874</accession>
<organism>
    <name type="scientific">Haemophilus influenzae (strain ATCC 51907 / DSM 11121 / KW20 / Rd)</name>
    <dbReference type="NCBI Taxonomy" id="71421"/>
    <lineage>
        <taxon>Bacteria</taxon>
        <taxon>Pseudomonadati</taxon>
        <taxon>Pseudomonadota</taxon>
        <taxon>Gammaproteobacteria</taxon>
        <taxon>Pasteurellales</taxon>
        <taxon>Pasteurellaceae</taxon>
        <taxon>Haemophilus</taxon>
    </lineage>
</organism>
<gene>
    <name type="primary">atoA</name>
    <name type="ordered locus">HI_0773</name>
</gene>
<comment type="function">
    <text evidence="1">Coenzyme A transferase which is involved in short-chain fatty acid degradation and catalyzes the activation of short-chain fatty acids to their respective CoA thiolesters.</text>
</comment>
<comment type="catalytic activity">
    <reaction evidence="1">
        <text>an acyl-CoA + acetate = a carboxylate + acetyl-CoA</text>
        <dbReference type="Rhea" id="RHEA:13381"/>
        <dbReference type="ChEBI" id="CHEBI:29067"/>
        <dbReference type="ChEBI" id="CHEBI:30089"/>
        <dbReference type="ChEBI" id="CHEBI:57288"/>
        <dbReference type="ChEBI" id="CHEBI:58342"/>
        <dbReference type="EC" id="2.8.3.8"/>
    </reaction>
</comment>
<comment type="catalytic activity">
    <reaction evidence="1">
        <text>acetoacetate + acetyl-CoA = acetoacetyl-CoA + acetate</text>
        <dbReference type="Rhea" id="RHEA:27806"/>
        <dbReference type="ChEBI" id="CHEBI:13705"/>
        <dbReference type="ChEBI" id="CHEBI:30089"/>
        <dbReference type="ChEBI" id="CHEBI:57286"/>
        <dbReference type="ChEBI" id="CHEBI:57288"/>
    </reaction>
</comment>
<comment type="pathway">
    <text evidence="1">Lipid metabolism; short-chain fatty acid metabolism.</text>
</comment>
<comment type="subunit">
    <text evidence="1">Heterotetramer composed of two alpha subunits (AtoD) and two beta subunits (AtoA).</text>
</comment>
<comment type="similarity">
    <text evidence="3">Belongs to the 3-oxoacid CoA-transferase subunit B family.</text>
</comment>
<protein>
    <recommendedName>
        <fullName evidence="1">Acetate CoA-transferase subunit beta</fullName>
        <ecNumber evidence="1">2.8.3.8</ecNumber>
    </recommendedName>
    <alternativeName>
        <fullName evidence="1">Acetyl-CoA:acetoacetate CoA-transferase subunit beta</fullName>
    </alternativeName>
</protein>
<sequence length="223" mass="23750">MNAKELIARRIAMELHDGDIVNLGIGLPTQVVNYLPDNVNITLQSENGFLGLTAFDPENANSNLVNAGGQPCGIKKGGSTFDSAFSFALIRGGHVDACVLGGLEVDQEANLANWMVPGKMVPGMGGAMDLVTGAKKVIIGMEHCAKSGSSKILKKCTLPLTASKKVAMVVTELAVFNFIEGRLVLKEHAPHVDLETIKAKTEADFIVADDFKEMQISQKGLEL</sequence>
<name>ATOA_HAEIN</name>